<evidence type="ECO:0000255" key="1">
    <source>
        <dbReference type="HAMAP-Rule" id="MF_00600"/>
    </source>
</evidence>
<evidence type="ECO:0000305" key="2"/>
<proteinExistence type="evidence at transcript level"/>
<accession>P35469</accession>
<organism>
    <name type="scientific">Rhizobium meliloti (strain 1021)</name>
    <name type="common">Ensifer meliloti</name>
    <name type="synonym">Sinorhizobium meliloti</name>
    <dbReference type="NCBI Taxonomy" id="266834"/>
    <lineage>
        <taxon>Bacteria</taxon>
        <taxon>Pseudomonadati</taxon>
        <taxon>Pseudomonadota</taxon>
        <taxon>Alphaproteobacteria</taxon>
        <taxon>Hyphomicrobiales</taxon>
        <taxon>Rhizobiaceae</taxon>
        <taxon>Sinorhizobium/Ensifer group</taxon>
        <taxon>Sinorhizobium</taxon>
    </lineage>
</organism>
<reference key="1">
    <citation type="journal article" date="1993" name="Gene">
        <title>Cloning and characterization of multiple groEL chaperonin-encoding genes in Rhizobium meliloti.</title>
        <authorList>
            <person name="Rusanganwa E."/>
            <person name="Gupta R.S."/>
        </authorList>
    </citation>
    <scope>NUCLEOTIDE SEQUENCE [GENOMIC DNA]</scope>
    <source>
        <strain>1021</strain>
    </source>
</reference>
<reference key="2">
    <citation type="submission" date="1995-01" db="EMBL/GenBank/DDBJ databases">
        <authorList>
            <person name="Ogawa J."/>
        </authorList>
    </citation>
    <scope>NUCLEOTIDE SEQUENCE [GENOMIC DNA]</scope>
    <source>
        <strain>1021</strain>
    </source>
</reference>
<reference key="3">
    <citation type="journal article" date="2001" name="Proc. Natl. Acad. Sci. U.S.A.">
        <title>Analysis of the chromosome sequence of the legume symbiont Sinorhizobium meliloti strain 1021.</title>
        <authorList>
            <person name="Capela D."/>
            <person name="Barloy-Hubler F."/>
            <person name="Gouzy J."/>
            <person name="Bothe G."/>
            <person name="Ampe F."/>
            <person name="Batut J."/>
            <person name="Boistard P."/>
            <person name="Becker A."/>
            <person name="Boutry M."/>
            <person name="Cadieu E."/>
            <person name="Dreano S."/>
            <person name="Gloux S."/>
            <person name="Godrie T."/>
            <person name="Goffeau A."/>
            <person name="Kahn D."/>
            <person name="Kiss E."/>
            <person name="Lelaure V."/>
            <person name="Masuy D."/>
            <person name="Pohl T."/>
            <person name="Portetelle D."/>
            <person name="Puehler A."/>
            <person name="Purnelle B."/>
            <person name="Ramsperger U."/>
            <person name="Renard C."/>
            <person name="Thebault P."/>
            <person name="Vandenbol M."/>
            <person name="Weidner S."/>
            <person name="Galibert F."/>
        </authorList>
    </citation>
    <scope>NUCLEOTIDE SEQUENCE [LARGE SCALE GENOMIC DNA]</scope>
    <source>
        <strain>1021</strain>
    </source>
</reference>
<reference key="4">
    <citation type="journal article" date="2001" name="Science">
        <title>The composite genome of the legume symbiont Sinorhizobium meliloti.</title>
        <authorList>
            <person name="Galibert F."/>
            <person name="Finan T.M."/>
            <person name="Long S.R."/>
            <person name="Puehler A."/>
            <person name="Abola P."/>
            <person name="Ampe F."/>
            <person name="Barloy-Hubler F."/>
            <person name="Barnett M.J."/>
            <person name="Becker A."/>
            <person name="Boistard P."/>
            <person name="Bothe G."/>
            <person name="Boutry M."/>
            <person name="Bowser L."/>
            <person name="Buhrmester J."/>
            <person name="Cadieu E."/>
            <person name="Capela D."/>
            <person name="Chain P."/>
            <person name="Cowie A."/>
            <person name="Davis R.W."/>
            <person name="Dreano S."/>
            <person name="Federspiel N.A."/>
            <person name="Fisher R.F."/>
            <person name="Gloux S."/>
            <person name="Godrie T."/>
            <person name="Goffeau A."/>
            <person name="Golding B."/>
            <person name="Gouzy J."/>
            <person name="Gurjal M."/>
            <person name="Hernandez-Lucas I."/>
            <person name="Hong A."/>
            <person name="Huizar L."/>
            <person name="Hyman R.W."/>
            <person name="Jones T."/>
            <person name="Kahn D."/>
            <person name="Kahn M.L."/>
            <person name="Kalman S."/>
            <person name="Keating D.H."/>
            <person name="Kiss E."/>
            <person name="Komp C."/>
            <person name="Lelaure V."/>
            <person name="Masuy D."/>
            <person name="Palm C."/>
            <person name="Peck M.C."/>
            <person name="Pohl T.M."/>
            <person name="Portetelle D."/>
            <person name="Purnelle B."/>
            <person name="Ramsperger U."/>
            <person name="Surzycki R."/>
            <person name="Thebault P."/>
            <person name="Vandenbol M."/>
            <person name="Vorhoelter F.J."/>
            <person name="Weidner S."/>
            <person name="Wells D.H."/>
            <person name="Wong K."/>
            <person name="Yeh K.-C."/>
            <person name="Batut J."/>
        </authorList>
    </citation>
    <scope>NUCLEOTIDE SEQUENCE [LARGE SCALE GENOMIC DNA]</scope>
    <source>
        <strain>1021</strain>
    </source>
</reference>
<dbReference type="EC" id="5.6.1.7" evidence="1"/>
<dbReference type="EMBL" id="M94192">
    <property type="protein sequence ID" value="AAA26285.1"/>
    <property type="molecule type" value="Genomic_DNA"/>
</dbReference>
<dbReference type="EMBL" id="U19726">
    <property type="protein sequence ID" value="AAA61955.1"/>
    <property type="molecule type" value="Genomic_DNA"/>
</dbReference>
<dbReference type="EMBL" id="AL591688">
    <property type="protein sequence ID" value="CAC45364.1"/>
    <property type="molecule type" value="Genomic_DNA"/>
</dbReference>
<dbReference type="PIR" id="JN0509">
    <property type="entry name" value="JN0509"/>
</dbReference>
<dbReference type="RefSeq" id="NP_384898.1">
    <property type="nucleotide sequence ID" value="NC_003047.1"/>
</dbReference>
<dbReference type="SMR" id="P35469"/>
<dbReference type="EnsemblBacteria" id="CAC45364">
    <property type="protein sequence ID" value="CAC45364"/>
    <property type="gene ID" value="SMc00913"/>
</dbReference>
<dbReference type="KEGG" id="sme:SMc00913"/>
<dbReference type="PATRIC" id="fig|266834.11.peg.2178"/>
<dbReference type="eggNOG" id="COG0459">
    <property type="taxonomic scope" value="Bacteria"/>
</dbReference>
<dbReference type="HOGENOM" id="CLU_016503_3_0_5"/>
<dbReference type="OrthoDB" id="9766614at2"/>
<dbReference type="Proteomes" id="UP000001976">
    <property type="component" value="Chromosome"/>
</dbReference>
<dbReference type="GO" id="GO:0005737">
    <property type="term" value="C:cytoplasm"/>
    <property type="evidence" value="ECO:0007669"/>
    <property type="project" value="UniProtKB-SubCell"/>
</dbReference>
<dbReference type="GO" id="GO:0005524">
    <property type="term" value="F:ATP binding"/>
    <property type="evidence" value="ECO:0007669"/>
    <property type="project" value="UniProtKB-UniRule"/>
</dbReference>
<dbReference type="GO" id="GO:0140662">
    <property type="term" value="F:ATP-dependent protein folding chaperone"/>
    <property type="evidence" value="ECO:0007669"/>
    <property type="project" value="InterPro"/>
</dbReference>
<dbReference type="GO" id="GO:0016853">
    <property type="term" value="F:isomerase activity"/>
    <property type="evidence" value="ECO:0007669"/>
    <property type="project" value="UniProtKB-KW"/>
</dbReference>
<dbReference type="GO" id="GO:0051082">
    <property type="term" value="F:unfolded protein binding"/>
    <property type="evidence" value="ECO:0007669"/>
    <property type="project" value="UniProtKB-UniRule"/>
</dbReference>
<dbReference type="GO" id="GO:0042026">
    <property type="term" value="P:protein refolding"/>
    <property type="evidence" value="ECO:0007669"/>
    <property type="project" value="UniProtKB-UniRule"/>
</dbReference>
<dbReference type="CDD" id="cd03344">
    <property type="entry name" value="GroEL"/>
    <property type="match status" value="1"/>
</dbReference>
<dbReference type="FunFam" id="1.10.560.10:FF:000001">
    <property type="entry name" value="60 kDa chaperonin"/>
    <property type="match status" value="1"/>
</dbReference>
<dbReference type="FunFam" id="3.50.7.10:FF:000001">
    <property type="entry name" value="60 kDa chaperonin"/>
    <property type="match status" value="1"/>
</dbReference>
<dbReference type="Gene3D" id="3.50.7.10">
    <property type="entry name" value="GroEL"/>
    <property type="match status" value="1"/>
</dbReference>
<dbReference type="Gene3D" id="1.10.560.10">
    <property type="entry name" value="GroEL-like equatorial domain"/>
    <property type="match status" value="1"/>
</dbReference>
<dbReference type="Gene3D" id="3.30.260.10">
    <property type="entry name" value="TCP-1-like chaperonin intermediate domain"/>
    <property type="match status" value="1"/>
</dbReference>
<dbReference type="HAMAP" id="MF_00600">
    <property type="entry name" value="CH60"/>
    <property type="match status" value="1"/>
</dbReference>
<dbReference type="InterPro" id="IPR018370">
    <property type="entry name" value="Chaperonin_Cpn60_CS"/>
</dbReference>
<dbReference type="InterPro" id="IPR001844">
    <property type="entry name" value="Cpn60/GroEL"/>
</dbReference>
<dbReference type="InterPro" id="IPR002423">
    <property type="entry name" value="Cpn60/GroEL/TCP-1"/>
</dbReference>
<dbReference type="InterPro" id="IPR027409">
    <property type="entry name" value="GroEL-like_apical_dom_sf"/>
</dbReference>
<dbReference type="InterPro" id="IPR027413">
    <property type="entry name" value="GROEL-like_equatorial_sf"/>
</dbReference>
<dbReference type="InterPro" id="IPR027410">
    <property type="entry name" value="TCP-1-like_intermed_sf"/>
</dbReference>
<dbReference type="NCBIfam" id="TIGR02348">
    <property type="entry name" value="GroEL"/>
    <property type="match status" value="1"/>
</dbReference>
<dbReference type="NCBIfam" id="NF000592">
    <property type="entry name" value="PRK00013.1"/>
    <property type="match status" value="1"/>
</dbReference>
<dbReference type="NCBIfam" id="NF009487">
    <property type="entry name" value="PRK12849.1"/>
    <property type="match status" value="1"/>
</dbReference>
<dbReference type="NCBIfam" id="NF009488">
    <property type="entry name" value="PRK12850.1"/>
    <property type="match status" value="1"/>
</dbReference>
<dbReference type="NCBIfam" id="NF009489">
    <property type="entry name" value="PRK12851.1"/>
    <property type="match status" value="1"/>
</dbReference>
<dbReference type="PANTHER" id="PTHR45633">
    <property type="entry name" value="60 KDA HEAT SHOCK PROTEIN, MITOCHONDRIAL"/>
    <property type="match status" value="1"/>
</dbReference>
<dbReference type="Pfam" id="PF00118">
    <property type="entry name" value="Cpn60_TCP1"/>
    <property type="match status" value="1"/>
</dbReference>
<dbReference type="PRINTS" id="PR00298">
    <property type="entry name" value="CHAPERONIN60"/>
</dbReference>
<dbReference type="SUPFAM" id="SSF52029">
    <property type="entry name" value="GroEL apical domain-like"/>
    <property type="match status" value="1"/>
</dbReference>
<dbReference type="SUPFAM" id="SSF48592">
    <property type="entry name" value="GroEL equatorial domain-like"/>
    <property type="match status" value="1"/>
</dbReference>
<dbReference type="SUPFAM" id="SSF54849">
    <property type="entry name" value="GroEL-intermediate domain like"/>
    <property type="match status" value="1"/>
</dbReference>
<dbReference type="PROSITE" id="PS00296">
    <property type="entry name" value="CHAPERONINS_CPN60"/>
    <property type="match status" value="1"/>
</dbReference>
<feature type="chain" id="PRO_0000063500" description="Chaperonin GroEL 1">
    <location>
        <begin position="1"/>
        <end position="545"/>
    </location>
</feature>
<feature type="binding site" evidence="1">
    <location>
        <begin position="30"/>
        <end position="33"/>
    </location>
    <ligand>
        <name>ATP</name>
        <dbReference type="ChEBI" id="CHEBI:30616"/>
    </ligand>
</feature>
<feature type="binding site" evidence="1">
    <location>
        <position position="51"/>
    </location>
    <ligand>
        <name>ATP</name>
        <dbReference type="ChEBI" id="CHEBI:30616"/>
    </ligand>
</feature>
<feature type="binding site" evidence="1">
    <location>
        <begin position="87"/>
        <end position="91"/>
    </location>
    <ligand>
        <name>ATP</name>
        <dbReference type="ChEBI" id="CHEBI:30616"/>
    </ligand>
</feature>
<feature type="binding site" evidence="1">
    <location>
        <position position="415"/>
    </location>
    <ligand>
        <name>ATP</name>
        <dbReference type="ChEBI" id="CHEBI:30616"/>
    </ligand>
</feature>
<feature type="binding site" evidence="1">
    <location>
        <position position="495"/>
    </location>
    <ligand>
        <name>ATP</name>
        <dbReference type="ChEBI" id="CHEBI:30616"/>
    </ligand>
</feature>
<feature type="sequence conflict" description="In Ref. 1; AAA26285." evidence="2" ref="1">
    <original>A</original>
    <variation>G</variation>
    <location>
        <position position="12"/>
    </location>
</feature>
<sequence>MAAKEVKFGRSAREKMLRGVDILADAVKVTLGPKGRNVVIDKSFGAPRITKDGVSVAKEIELEDKFENMGAQMVREVASKTNDIAGDGTTTATVLAQAIVREGAKAVAAGMNPMDLKRGIDLAVAEVVKDLLAKAKKINTSDEVAQVGTISANGEKQIGLDIAEAMQKVGNEGVITVEEAKTAETELEVVEGMQFDRGYLSPYFVTNPEKMVADLEDAFILLHEKKLSNLQAMLPVLEAVVQTGKPLLIIAEDVEGEALATLVVNKLRGGLKIAAVKAPGFGDRRKAMLEDIAILTGGTVISEDLGIKLESVTLDMLGRAKKVSITKENTTIVDGAGQKSDIEGRVAQIKAQIEETTSDYDREKLQERLAKLAGGVAVIRVGGATEVEVKEKKDRIDDALNATRAAVQEGIVPGGGVALLRSSVKITVKGENDDQDAGVNIVRRALQSPARQIVENAGDEASIVVGKILEKNTDDFGYNAQTGEYGDMIAMGIIDPVKVVRTALQDAASVASLLITTEAMIAELPKKDAPAMPGGMGGMGGMDMM</sequence>
<name>CH601_RHIME</name>
<keyword id="KW-0067">ATP-binding</keyword>
<keyword id="KW-0143">Chaperone</keyword>
<keyword id="KW-0963">Cytoplasm</keyword>
<keyword id="KW-0413">Isomerase</keyword>
<keyword id="KW-0547">Nucleotide-binding</keyword>
<keyword id="KW-1185">Reference proteome</keyword>
<keyword id="KW-0346">Stress response</keyword>
<gene>
    <name evidence="1" type="primary">groEL1</name>
    <name evidence="1" type="synonym">groL1</name>
    <name type="ordered locus">R00792</name>
    <name type="ORF">SMc00913</name>
</gene>
<protein>
    <recommendedName>
        <fullName evidence="1">Chaperonin GroEL 1</fullName>
        <ecNumber evidence="1">5.6.1.7</ecNumber>
    </recommendedName>
    <alternativeName>
        <fullName evidence="1">60 kDa chaperonin 1</fullName>
    </alternativeName>
    <alternativeName>
        <fullName evidence="1">Chaperonin-60 1</fullName>
        <shortName evidence="1">Cpn60 1</shortName>
    </alternativeName>
</protein>
<comment type="function">
    <text evidence="1">Together with its co-chaperonin GroES, plays an essential role in assisting protein folding. The GroEL-GroES system forms a nano-cage that allows encapsulation of the non-native substrate proteins and provides a physical environment optimized to promote and accelerate protein folding.</text>
</comment>
<comment type="catalytic activity">
    <reaction evidence="1">
        <text>ATP + H2O + a folded polypeptide = ADP + phosphate + an unfolded polypeptide.</text>
        <dbReference type="EC" id="5.6.1.7"/>
    </reaction>
</comment>
<comment type="subunit">
    <text evidence="1">Forms a cylinder of 14 subunits composed of two heptameric rings stacked back-to-back. Interacts with the co-chaperonin GroES.</text>
</comment>
<comment type="subcellular location">
    <subcellularLocation>
        <location evidence="1">Cytoplasm</location>
    </subcellularLocation>
</comment>
<comment type="induction">
    <text>By heat shock.</text>
</comment>
<comment type="similarity">
    <text evidence="1">Belongs to the chaperonin (HSP60) family.</text>
</comment>